<evidence type="ECO:0000255" key="1">
    <source>
        <dbReference type="HAMAP-Rule" id="MF_00690"/>
    </source>
</evidence>
<feature type="chain" id="PRO_1000132015" description="UPF0270 protein YheU">
    <location>
        <begin position="1"/>
        <end position="72"/>
    </location>
</feature>
<organism>
    <name type="scientific">Escherichia fergusonii (strain ATCC 35469 / DSM 13698 / CCUG 18766 / IAM 14443 / JCM 21226 / LMG 7866 / NBRC 102419 / NCTC 12128 / CDC 0568-73)</name>
    <dbReference type="NCBI Taxonomy" id="585054"/>
    <lineage>
        <taxon>Bacteria</taxon>
        <taxon>Pseudomonadati</taxon>
        <taxon>Pseudomonadota</taxon>
        <taxon>Gammaproteobacteria</taxon>
        <taxon>Enterobacterales</taxon>
        <taxon>Enterobacteriaceae</taxon>
        <taxon>Escherichia</taxon>
    </lineage>
</organism>
<reference key="1">
    <citation type="journal article" date="2009" name="PLoS Genet.">
        <title>Organised genome dynamics in the Escherichia coli species results in highly diverse adaptive paths.</title>
        <authorList>
            <person name="Touchon M."/>
            <person name="Hoede C."/>
            <person name="Tenaillon O."/>
            <person name="Barbe V."/>
            <person name="Baeriswyl S."/>
            <person name="Bidet P."/>
            <person name="Bingen E."/>
            <person name="Bonacorsi S."/>
            <person name="Bouchier C."/>
            <person name="Bouvet O."/>
            <person name="Calteau A."/>
            <person name="Chiapello H."/>
            <person name="Clermont O."/>
            <person name="Cruveiller S."/>
            <person name="Danchin A."/>
            <person name="Diard M."/>
            <person name="Dossat C."/>
            <person name="Karoui M.E."/>
            <person name="Frapy E."/>
            <person name="Garry L."/>
            <person name="Ghigo J.M."/>
            <person name="Gilles A.M."/>
            <person name="Johnson J."/>
            <person name="Le Bouguenec C."/>
            <person name="Lescat M."/>
            <person name="Mangenot S."/>
            <person name="Martinez-Jehanne V."/>
            <person name="Matic I."/>
            <person name="Nassif X."/>
            <person name="Oztas S."/>
            <person name="Petit M.A."/>
            <person name="Pichon C."/>
            <person name="Rouy Z."/>
            <person name="Ruf C.S."/>
            <person name="Schneider D."/>
            <person name="Tourret J."/>
            <person name="Vacherie B."/>
            <person name="Vallenet D."/>
            <person name="Medigue C."/>
            <person name="Rocha E.P.C."/>
            <person name="Denamur E."/>
        </authorList>
    </citation>
    <scope>NUCLEOTIDE SEQUENCE [LARGE SCALE GENOMIC DNA]</scope>
    <source>
        <strain>ATCC 35469 / DSM 13698 / BCRC 15582 / CCUG 18766 / IAM 14443 / JCM 21226 / LMG 7866 / NBRC 102419 / NCTC 12128 / CDC 0568-73</strain>
    </source>
</reference>
<accession>B7LS61</accession>
<comment type="similarity">
    <text evidence="1">Belongs to the UPF0270 family.</text>
</comment>
<proteinExistence type="inferred from homology"/>
<dbReference type="EMBL" id="CU928158">
    <property type="protein sequence ID" value="CAQ90804.1"/>
    <property type="molecule type" value="Genomic_DNA"/>
</dbReference>
<dbReference type="RefSeq" id="WP_000907089.1">
    <property type="nucleotide sequence ID" value="NC_011740.1"/>
</dbReference>
<dbReference type="SMR" id="B7LS61"/>
<dbReference type="KEGG" id="efe:EFER_3326"/>
<dbReference type="HOGENOM" id="CLU_186759_1_0_6"/>
<dbReference type="OrthoDB" id="6120729at2"/>
<dbReference type="Proteomes" id="UP000000745">
    <property type="component" value="Chromosome"/>
</dbReference>
<dbReference type="Gene3D" id="1.10.10.610">
    <property type="entry name" value="YehU-like"/>
    <property type="match status" value="1"/>
</dbReference>
<dbReference type="HAMAP" id="MF_00690">
    <property type="entry name" value="UPF0270"/>
    <property type="match status" value="1"/>
</dbReference>
<dbReference type="InterPro" id="IPR010648">
    <property type="entry name" value="UPF0270"/>
</dbReference>
<dbReference type="InterPro" id="IPR036685">
    <property type="entry name" value="YehU-like_sf"/>
</dbReference>
<dbReference type="NCBIfam" id="NF003438">
    <property type="entry name" value="PRK04966.1"/>
    <property type="match status" value="1"/>
</dbReference>
<dbReference type="Pfam" id="PF06794">
    <property type="entry name" value="UPF0270"/>
    <property type="match status" value="1"/>
</dbReference>
<dbReference type="PIRSF" id="PIRSF006169">
    <property type="entry name" value="UCP006169"/>
    <property type="match status" value="1"/>
</dbReference>
<dbReference type="SUPFAM" id="SSF118001">
    <property type="entry name" value="YehU-like"/>
    <property type="match status" value="1"/>
</dbReference>
<protein>
    <recommendedName>
        <fullName evidence="1">UPF0270 protein YheU</fullName>
    </recommendedName>
</protein>
<gene>
    <name evidence="1" type="primary">yheU</name>
    <name type="ordered locus">EFER_3326</name>
</gene>
<name>YHEU_ESCF3</name>
<sequence>MLIPWQELSPETLENLIESFVLREGTDYGEHERTLEQKVADVKRQLQCGEAVLVWSELHETVNIMPRSQFRE</sequence>